<name>CROC4_HUMAN</name>
<proteinExistence type="evidence at transcript level"/>
<accession>Q13536</accession>
<accession>B1ALL5</accession>
<accession>B1ALL8</accession>
<sequence>MFLTEDLITFNLRNFLLFQLWESSFSPGAGGFCTTLPPSFLRVDDRATSSTTDSSRAPSSPRPPGSTSHCGISTRCTERCLCVLPLRTSQVPDVMAPQHDQEKFHDLAYSCLGKSFSMSNQDLYGYSTSSLALGLAWLSWETKKKNVLHLVGLDSL</sequence>
<comment type="function">
    <text evidence="2">May play a role in FOS signaling pathways involved in development and remodeling of neurons. Promotes transcription of the FOS promoter.</text>
</comment>
<comment type="subcellular location">
    <subcellularLocation>
        <location evidence="2">Nucleus</location>
    </subcellularLocation>
    <text>Associates within the nuclear transcriptional apparatus during proliferation and differentiation.</text>
</comment>
<comment type="tissue specificity">
    <text evidence="2">Expressed throughout the brain in the thalamus, subthalamic nucleus, corpus callosum, hippocampus, substantia nigra, caudate nucleus, and amygdala.</text>
</comment>
<protein>
    <recommendedName>
        <fullName>Protein CROC-4</fullName>
    </recommendedName>
    <alternativeName>
        <fullName>Contingent replication of cDNA 4</fullName>
    </alternativeName>
    <alternativeName>
        <fullName evidence="3">MIR9-1 host gene</fullName>
    </alternativeName>
</protein>
<dbReference type="EMBL" id="U49857">
    <property type="protein sequence ID" value="AAA93029.1"/>
    <property type="molecule type" value="mRNA"/>
</dbReference>
<dbReference type="EMBL" id="AL139130">
    <property type="status" value="NOT_ANNOTATED_CDS"/>
    <property type="molecule type" value="Genomic_DNA"/>
</dbReference>
<dbReference type="EMBL" id="CH471121">
    <property type="protein sequence ID" value="EAW52956.1"/>
    <property type="molecule type" value="Genomic_DNA"/>
</dbReference>
<dbReference type="RefSeq" id="NP_006356.1">
    <property type="nucleotide sequence ID" value="NM_006365.2"/>
</dbReference>
<dbReference type="RefSeq" id="XP_011507372.1">
    <property type="nucleotide sequence ID" value="XM_011509070.1"/>
</dbReference>
<dbReference type="RefSeq" id="XP_011507373.1">
    <property type="nucleotide sequence ID" value="XM_011509071.2"/>
</dbReference>
<dbReference type="RefSeq" id="XP_011507374.1">
    <property type="nucleotide sequence ID" value="XM_011509072.1"/>
</dbReference>
<dbReference type="RefSeq" id="XP_016855551.1">
    <property type="nucleotide sequence ID" value="XM_017000062.1"/>
</dbReference>
<dbReference type="RefSeq" id="XP_016855552.1">
    <property type="nucleotide sequence ID" value="XM_017000063.1"/>
</dbReference>
<dbReference type="BioGRID" id="115748">
    <property type="interactions" value="6"/>
</dbReference>
<dbReference type="FunCoup" id="Q13536">
    <property type="interactions" value="81"/>
</dbReference>
<dbReference type="IntAct" id="Q13536">
    <property type="interactions" value="2"/>
</dbReference>
<dbReference type="BioMuta" id="C1orf61"/>
<dbReference type="PaxDb" id="9606-ENSP00000357226"/>
<dbReference type="DNASU" id="10485"/>
<dbReference type="UCSC" id="uc001fou.2">
    <property type="organism name" value="human"/>
</dbReference>
<dbReference type="AGR" id="HGNC:30780"/>
<dbReference type="DisGeNET" id="10485"/>
<dbReference type="GeneCards" id="MIR9-1HG"/>
<dbReference type="HGNC" id="HGNC:30780">
    <property type="gene designation" value="MIR9-1HG"/>
</dbReference>
<dbReference type="MIM" id="618747">
    <property type="type" value="gene"/>
</dbReference>
<dbReference type="neXtProt" id="NX_Q13536"/>
<dbReference type="eggNOG" id="ENOG502TF2T">
    <property type="taxonomic scope" value="Eukaryota"/>
</dbReference>
<dbReference type="HOGENOM" id="CLU_131272_0_0_1"/>
<dbReference type="InParanoid" id="Q13536"/>
<dbReference type="PAN-GO" id="Q13536">
    <property type="GO annotations" value="0 GO annotations based on evolutionary models"/>
</dbReference>
<dbReference type="PhylomeDB" id="Q13536"/>
<dbReference type="TreeFam" id="TF342418"/>
<dbReference type="PathwayCommons" id="Q13536"/>
<dbReference type="SignaLink" id="Q13536"/>
<dbReference type="SIGNOR" id="Q13536"/>
<dbReference type="BioGRID-ORCS" id="10485">
    <property type="hits" value="8 hits in 1134 CRISPR screens"/>
</dbReference>
<dbReference type="ChiTaRS" id="C1orf61">
    <property type="organism name" value="human"/>
</dbReference>
<dbReference type="GenomeRNAi" id="10485"/>
<dbReference type="Pharos" id="Q13536">
    <property type="development level" value="Tdark"/>
</dbReference>
<dbReference type="PRO" id="PR:Q13536"/>
<dbReference type="Proteomes" id="UP000005640">
    <property type="component" value="Chromosome 1"/>
</dbReference>
<dbReference type="RNAct" id="Q13536">
    <property type="molecule type" value="protein"/>
</dbReference>
<dbReference type="GO" id="GO:0005634">
    <property type="term" value="C:nucleus"/>
    <property type="evidence" value="ECO:0000304"/>
    <property type="project" value="UniProtKB"/>
</dbReference>
<dbReference type="GO" id="GO:0045944">
    <property type="term" value="P:positive regulation of transcription by RNA polymerase II"/>
    <property type="evidence" value="ECO:0000314"/>
    <property type="project" value="UniProtKB"/>
</dbReference>
<evidence type="ECO:0000256" key="1">
    <source>
        <dbReference type="SAM" id="MobiDB-lite"/>
    </source>
</evidence>
<evidence type="ECO:0000269" key="2">
    <source>
    </source>
</evidence>
<evidence type="ECO:0000312" key="3">
    <source>
        <dbReference type="HGNC" id="HGNC:30780"/>
    </source>
</evidence>
<gene>
    <name evidence="3" type="primary">MIR9-1HG</name>
    <name evidence="3" type="synonym">C1orf61</name>
    <name type="synonym">CROC4</name>
</gene>
<feature type="chain" id="PRO_0000333952" description="Protein CROC-4">
    <location>
        <begin position="1"/>
        <end position="156"/>
    </location>
</feature>
<feature type="region of interest" description="Disordered" evidence="1">
    <location>
        <begin position="46"/>
        <end position="71"/>
    </location>
</feature>
<feature type="compositionally biased region" description="Low complexity" evidence="1">
    <location>
        <begin position="48"/>
        <end position="59"/>
    </location>
</feature>
<keyword id="KW-0539">Nucleus</keyword>
<keyword id="KW-1185">Reference proteome</keyword>
<reference key="1">
    <citation type="journal article" date="2000" name="Mol. Cell. Neurosci.">
        <title>CROC-4: a novel brain specific transcriptional activator of c-fos expressed from proliferation through to maturation of multiple neuronal cell types.</title>
        <authorList>
            <person name="Jeffrey P.L."/>
            <person name="Capes-Davis A."/>
            <person name="Dunn J.M."/>
            <person name="Tolhurst O."/>
            <person name="Seeto G."/>
            <person name="Hannan A.J."/>
            <person name="Lin S.L."/>
        </authorList>
    </citation>
    <scope>NUCLEOTIDE SEQUENCE [MRNA]</scope>
    <scope>FUNCTION</scope>
    <scope>SUBCELLULAR LOCATION</scope>
    <scope>TISSUE SPECIFICITY</scope>
    <source>
        <tissue>Brain</tissue>
    </source>
</reference>
<reference key="2">
    <citation type="journal article" date="2006" name="Nature">
        <title>The DNA sequence and biological annotation of human chromosome 1.</title>
        <authorList>
            <person name="Gregory S.G."/>
            <person name="Barlow K.F."/>
            <person name="McLay K.E."/>
            <person name="Kaul R."/>
            <person name="Swarbreck D."/>
            <person name="Dunham A."/>
            <person name="Scott C.E."/>
            <person name="Howe K.L."/>
            <person name="Woodfine K."/>
            <person name="Spencer C.C.A."/>
            <person name="Jones M.C."/>
            <person name="Gillson C."/>
            <person name="Searle S."/>
            <person name="Zhou Y."/>
            <person name="Kokocinski F."/>
            <person name="McDonald L."/>
            <person name="Evans R."/>
            <person name="Phillips K."/>
            <person name="Atkinson A."/>
            <person name="Cooper R."/>
            <person name="Jones C."/>
            <person name="Hall R.E."/>
            <person name="Andrews T.D."/>
            <person name="Lloyd C."/>
            <person name="Ainscough R."/>
            <person name="Almeida J.P."/>
            <person name="Ambrose K.D."/>
            <person name="Anderson F."/>
            <person name="Andrew R.W."/>
            <person name="Ashwell R.I.S."/>
            <person name="Aubin K."/>
            <person name="Babbage A.K."/>
            <person name="Bagguley C.L."/>
            <person name="Bailey J."/>
            <person name="Beasley H."/>
            <person name="Bethel G."/>
            <person name="Bird C.P."/>
            <person name="Bray-Allen S."/>
            <person name="Brown J.Y."/>
            <person name="Brown A.J."/>
            <person name="Buckley D."/>
            <person name="Burton J."/>
            <person name="Bye J."/>
            <person name="Carder C."/>
            <person name="Chapman J.C."/>
            <person name="Clark S.Y."/>
            <person name="Clarke G."/>
            <person name="Clee C."/>
            <person name="Cobley V."/>
            <person name="Collier R.E."/>
            <person name="Corby N."/>
            <person name="Coville G.J."/>
            <person name="Davies J."/>
            <person name="Deadman R."/>
            <person name="Dunn M."/>
            <person name="Earthrowl M."/>
            <person name="Ellington A.G."/>
            <person name="Errington H."/>
            <person name="Frankish A."/>
            <person name="Frankland J."/>
            <person name="French L."/>
            <person name="Garner P."/>
            <person name="Garnett J."/>
            <person name="Gay L."/>
            <person name="Ghori M.R.J."/>
            <person name="Gibson R."/>
            <person name="Gilby L.M."/>
            <person name="Gillett W."/>
            <person name="Glithero R.J."/>
            <person name="Grafham D.V."/>
            <person name="Griffiths C."/>
            <person name="Griffiths-Jones S."/>
            <person name="Grocock R."/>
            <person name="Hammond S."/>
            <person name="Harrison E.S.I."/>
            <person name="Hart E."/>
            <person name="Haugen E."/>
            <person name="Heath P.D."/>
            <person name="Holmes S."/>
            <person name="Holt K."/>
            <person name="Howden P.J."/>
            <person name="Hunt A.R."/>
            <person name="Hunt S.E."/>
            <person name="Hunter G."/>
            <person name="Isherwood J."/>
            <person name="James R."/>
            <person name="Johnson C."/>
            <person name="Johnson D."/>
            <person name="Joy A."/>
            <person name="Kay M."/>
            <person name="Kershaw J.K."/>
            <person name="Kibukawa M."/>
            <person name="Kimberley A.M."/>
            <person name="King A."/>
            <person name="Knights A.J."/>
            <person name="Lad H."/>
            <person name="Laird G."/>
            <person name="Lawlor S."/>
            <person name="Leongamornlert D.A."/>
            <person name="Lloyd D.M."/>
            <person name="Loveland J."/>
            <person name="Lovell J."/>
            <person name="Lush M.J."/>
            <person name="Lyne R."/>
            <person name="Martin S."/>
            <person name="Mashreghi-Mohammadi M."/>
            <person name="Matthews L."/>
            <person name="Matthews N.S.W."/>
            <person name="McLaren S."/>
            <person name="Milne S."/>
            <person name="Mistry S."/>
            <person name="Moore M.J.F."/>
            <person name="Nickerson T."/>
            <person name="O'Dell C.N."/>
            <person name="Oliver K."/>
            <person name="Palmeiri A."/>
            <person name="Palmer S.A."/>
            <person name="Parker A."/>
            <person name="Patel D."/>
            <person name="Pearce A.V."/>
            <person name="Peck A.I."/>
            <person name="Pelan S."/>
            <person name="Phelps K."/>
            <person name="Phillimore B.J."/>
            <person name="Plumb R."/>
            <person name="Rajan J."/>
            <person name="Raymond C."/>
            <person name="Rouse G."/>
            <person name="Saenphimmachak C."/>
            <person name="Sehra H.K."/>
            <person name="Sheridan E."/>
            <person name="Shownkeen R."/>
            <person name="Sims S."/>
            <person name="Skuce C.D."/>
            <person name="Smith M."/>
            <person name="Steward C."/>
            <person name="Subramanian S."/>
            <person name="Sycamore N."/>
            <person name="Tracey A."/>
            <person name="Tromans A."/>
            <person name="Van Helmond Z."/>
            <person name="Wall M."/>
            <person name="Wallis J.M."/>
            <person name="White S."/>
            <person name="Whitehead S.L."/>
            <person name="Wilkinson J.E."/>
            <person name="Willey D.L."/>
            <person name="Williams H."/>
            <person name="Wilming L."/>
            <person name="Wray P.W."/>
            <person name="Wu Z."/>
            <person name="Coulson A."/>
            <person name="Vaudin M."/>
            <person name="Sulston J.E."/>
            <person name="Durbin R.M."/>
            <person name="Hubbard T."/>
            <person name="Wooster R."/>
            <person name="Dunham I."/>
            <person name="Carter N.P."/>
            <person name="McVean G."/>
            <person name="Ross M.T."/>
            <person name="Harrow J."/>
            <person name="Olson M.V."/>
            <person name="Beck S."/>
            <person name="Rogers J."/>
            <person name="Bentley D.R."/>
        </authorList>
    </citation>
    <scope>NUCLEOTIDE SEQUENCE [LARGE SCALE GENOMIC DNA]</scope>
</reference>
<reference key="3">
    <citation type="submission" date="2005-09" db="EMBL/GenBank/DDBJ databases">
        <authorList>
            <person name="Mural R.J."/>
            <person name="Istrail S."/>
            <person name="Sutton G.G."/>
            <person name="Florea L."/>
            <person name="Halpern A.L."/>
            <person name="Mobarry C.M."/>
            <person name="Lippert R."/>
            <person name="Walenz B."/>
            <person name="Shatkay H."/>
            <person name="Dew I."/>
            <person name="Miller J.R."/>
            <person name="Flanigan M.J."/>
            <person name="Edwards N.J."/>
            <person name="Bolanos R."/>
            <person name="Fasulo D."/>
            <person name="Halldorsson B.V."/>
            <person name="Hannenhalli S."/>
            <person name="Turner R."/>
            <person name="Yooseph S."/>
            <person name="Lu F."/>
            <person name="Nusskern D.R."/>
            <person name="Shue B.C."/>
            <person name="Zheng X.H."/>
            <person name="Zhong F."/>
            <person name="Delcher A.L."/>
            <person name="Huson D.H."/>
            <person name="Kravitz S.A."/>
            <person name="Mouchard L."/>
            <person name="Reinert K."/>
            <person name="Remington K.A."/>
            <person name="Clark A.G."/>
            <person name="Waterman M.S."/>
            <person name="Eichler E.E."/>
            <person name="Adams M.D."/>
            <person name="Hunkapiller M.W."/>
            <person name="Myers E.W."/>
            <person name="Venter J.C."/>
        </authorList>
    </citation>
    <scope>NUCLEOTIDE SEQUENCE [LARGE SCALE GENOMIC DNA]</scope>
</reference>
<organism>
    <name type="scientific">Homo sapiens</name>
    <name type="common">Human</name>
    <dbReference type="NCBI Taxonomy" id="9606"/>
    <lineage>
        <taxon>Eukaryota</taxon>
        <taxon>Metazoa</taxon>
        <taxon>Chordata</taxon>
        <taxon>Craniata</taxon>
        <taxon>Vertebrata</taxon>
        <taxon>Euteleostomi</taxon>
        <taxon>Mammalia</taxon>
        <taxon>Eutheria</taxon>
        <taxon>Euarchontoglires</taxon>
        <taxon>Primates</taxon>
        <taxon>Haplorrhini</taxon>
        <taxon>Catarrhini</taxon>
        <taxon>Hominidae</taxon>
        <taxon>Homo</taxon>
    </lineage>
</organism>